<keyword id="KW-0963">Cytoplasm</keyword>
<keyword id="KW-0206">Cytoskeleton</keyword>
<keyword id="KW-0254">Endocytosis</keyword>
<keyword id="KW-0256">Endoplasmic reticulum</keyword>
<keyword id="KW-0378">Hydrolase</keyword>
<keyword id="KW-0479">Metal-binding</keyword>
<keyword id="KW-0597">Phosphoprotein</keyword>
<keyword id="KW-0645">Protease</keyword>
<keyword id="KW-1185">Reference proteome</keyword>
<keyword id="KW-0677">Repeat</keyword>
<keyword id="KW-0788">Thiol protease</keyword>
<keyword id="KW-0832">Ubl conjugation</keyword>
<keyword id="KW-0833">Ubl conjugation pathway</keyword>
<keyword id="KW-0862">Zinc</keyword>
<keyword id="KW-0863">Zinc-finger</keyword>
<accession>A7Z056</accession>
<organism>
    <name type="scientific">Bos taurus</name>
    <name type="common">Bovine</name>
    <dbReference type="NCBI Taxonomy" id="9913"/>
    <lineage>
        <taxon>Eukaryota</taxon>
        <taxon>Metazoa</taxon>
        <taxon>Chordata</taxon>
        <taxon>Craniata</taxon>
        <taxon>Vertebrata</taxon>
        <taxon>Euteleostomi</taxon>
        <taxon>Mammalia</taxon>
        <taxon>Eutheria</taxon>
        <taxon>Laurasiatheria</taxon>
        <taxon>Artiodactyla</taxon>
        <taxon>Ruminantia</taxon>
        <taxon>Pecora</taxon>
        <taxon>Bovidae</taxon>
        <taxon>Bovinae</taxon>
        <taxon>Bos</taxon>
    </lineage>
</organism>
<reference key="1">
    <citation type="submission" date="2007-09" db="EMBL/GenBank/DDBJ databases">
        <authorList>
            <consortium name="NIH - Mammalian Gene Collection (MGC) project"/>
        </authorList>
    </citation>
    <scope>NUCLEOTIDE SEQUENCE [LARGE SCALE MRNA]</scope>
    <source>
        <strain>Hereford</strain>
        <tissue>Uterus</tissue>
    </source>
</reference>
<proteinExistence type="evidence at transcript level"/>
<protein>
    <recommendedName>
        <fullName>Ubiquitin carboxyl-terminal hydrolase 20</fullName>
        <ecNumber>3.4.19.12</ecNumber>
    </recommendedName>
    <alternativeName>
        <fullName>Deubiquitinating enzyme 20</fullName>
    </alternativeName>
    <alternativeName>
        <fullName>Ubiquitin thioesterase 20</fullName>
    </alternativeName>
    <alternativeName>
        <fullName>Ubiquitin-specific-processing protease 20</fullName>
    </alternativeName>
</protein>
<comment type="function">
    <text evidence="3">Deubiquitinating enzyme that plays a role in many cellular processes including autophagy, cellular antiviral response or membrane protein biogenesis. Attenuates TLR4-mediated NF-kappa-B signaling by cooperating with beta-arrestin-2/ARRB2 and inhibiting TRAF6 autoubiquitination. Promotes cellular antiviral responses by deconjugating 'Lys-33' and 'Lys-48'-linked ubiquitination of STING1 leading to its stabilization. Plays an essential role in autophagy induction by regulating the ULK1 stability through deubiquitination of ULK1. Acts as a positive regulator for NF-kappa-B activation by TNF-alpha through deubiquitinating 'Lys-48'-linked polyubiquitination of SQSTM1, leading to its increased stability. Acts as a regulator of G-protein coupled receptor (GPCR) signaling by mediating the deubiquitination beta-2 adrenergic receptor (ADRB2). Plays a central role in ADRB2 recycling and resensitization after prolonged agonist stimulation by constitutively binding ADRB2, mediating deubiquitination of ADRB2 and inhibiting lysosomal trafficking of ADRB2. Upon dissociation, it is probably transferred to the translocated beta-arrestins, possibly leading to beta-arrestins deubiquitination and disengagement from ADRB2. This suggests the existence of a dynamic exchange between the ADRB2 and beta-arrestins. Deubiquitinates DIO2, thereby regulating thyroid hormone regulation. Deubiquitinates HIF1A, leading to stabilize HIF1A and enhance HIF1A-mediated activity. Deubiquitinates MCL1, a pivotal member of the anti-apoptotic Bcl-2 protein family to regulate its stability. Within the endoplasmic reticulum, participates with USP33 in the rescue of post-translationally targeted membrane proteins that are inappropriately ubiquitinated by the cytosolic protein quality control in the cytosol.</text>
</comment>
<comment type="catalytic activity">
    <reaction evidence="3">
        <text>Thiol-dependent hydrolysis of ester, thioester, amide, peptide and isopeptide bonds formed by the C-terminal Gly of ubiquitin (a 76-residue protein attached to proteins as an intracellular targeting signal).</text>
        <dbReference type="EC" id="3.4.19.12"/>
    </reaction>
</comment>
<comment type="subunit">
    <text evidence="3">Interacts with VHL, leading to its ubiquitination and subsequent degradation. Interacts with CCP110. Interacts with DIO2. Interacts with HIF1A. Interacts with ADRB2. Interacts with USP18.</text>
</comment>
<comment type="subcellular location">
    <subcellularLocation>
        <location evidence="2">Cytoplasm</location>
    </subcellularLocation>
    <subcellularLocation>
        <location evidence="3">Endoplasmic reticulum</location>
    </subcellularLocation>
    <subcellularLocation>
        <location evidence="3">Cytoplasm</location>
        <location evidence="3">Perinuclear region</location>
    </subcellularLocation>
    <subcellularLocation>
        <location evidence="3">Cytoplasm</location>
        <location evidence="3">Cytoskeleton</location>
        <location evidence="3">Microtubule organizing center</location>
        <location evidence="3">Centrosome</location>
    </subcellularLocation>
</comment>
<comment type="domain">
    <text evidence="1">The UBP-type zinc finger binds 3 zinc ions. However, it does not bind ubiquitin, probably because the conserved Arg in position 55 is replaced by a Glu residue (By similarity).</text>
</comment>
<comment type="PTM">
    <text evidence="1">Ubiquitinated via a VHL-dependent pathway for proteasomal degradation.</text>
</comment>
<comment type="similarity">
    <text evidence="9">Belongs to the peptidase C19 family. USP20/USP33 subfamily.</text>
</comment>
<gene>
    <name type="primary">USP20</name>
</gene>
<feature type="chain" id="PRO_0000390417" description="Ubiquitin carboxyl-terminal hydrolase 20">
    <location>
        <begin position="1"/>
        <end position="912"/>
    </location>
</feature>
<feature type="domain" description="USP">
    <location>
        <begin position="145"/>
        <end position="683"/>
    </location>
</feature>
<feature type="domain" description="DUSP 1" evidence="5">
    <location>
        <begin position="685"/>
        <end position="778"/>
    </location>
</feature>
<feature type="domain" description="DUSP 2" evidence="5">
    <location>
        <begin position="787"/>
        <end position="890"/>
    </location>
</feature>
<feature type="zinc finger region" description="UBP-type" evidence="4">
    <location>
        <begin position="6"/>
        <end position="111"/>
    </location>
</feature>
<feature type="region of interest" description="Disordered" evidence="8">
    <location>
        <begin position="101"/>
        <end position="120"/>
    </location>
</feature>
<feature type="region of interest" description="Disordered" evidence="8">
    <location>
        <begin position="258"/>
        <end position="308"/>
    </location>
</feature>
<feature type="region of interest" description="Disordered" evidence="8">
    <location>
        <begin position="322"/>
        <end position="415"/>
    </location>
</feature>
<feature type="compositionally biased region" description="Basic and acidic residues" evidence="8">
    <location>
        <begin position="260"/>
        <end position="280"/>
    </location>
</feature>
<feature type="compositionally biased region" description="Basic and acidic residues" evidence="8">
    <location>
        <begin position="322"/>
        <end position="333"/>
    </location>
</feature>
<feature type="active site" description="Nucleophile" evidence="6 7">
    <location>
        <position position="154"/>
    </location>
</feature>
<feature type="active site" description="Proton acceptor" evidence="6 7">
    <location>
        <position position="641"/>
    </location>
</feature>
<feature type="binding site" evidence="4">
    <location>
        <position position="8"/>
    </location>
    <ligand>
        <name>Zn(2+)</name>
        <dbReference type="ChEBI" id="CHEBI:29105"/>
        <label>1</label>
    </ligand>
</feature>
<feature type="binding site" evidence="4">
    <location>
        <position position="10"/>
    </location>
    <ligand>
        <name>Zn(2+)</name>
        <dbReference type="ChEBI" id="CHEBI:29105"/>
        <label>1</label>
    </ligand>
</feature>
<feature type="binding site" evidence="4">
    <location>
        <position position="30"/>
    </location>
    <ligand>
        <name>Zn(2+)</name>
        <dbReference type="ChEBI" id="CHEBI:29105"/>
        <label>2</label>
    </ligand>
</feature>
<feature type="binding site" evidence="4">
    <location>
        <position position="33"/>
    </location>
    <ligand>
        <name>Zn(2+)</name>
        <dbReference type="ChEBI" id="CHEBI:29105"/>
        <label>2</label>
    </ligand>
</feature>
<feature type="binding site" evidence="4">
    <location>
        <position position="43"/>
    </location>
    <ligand>
        <name>Zn(2+)</name>
        <dbReference type="ChEBI" id="CHEBI:29105"/>
        <label>3</label>
    </ligand>
</feature>
<feature type="binding site" evidence="4">
    <location>
        <position position="48"/>
    </location>
    <ligand>
        <name>Zn(2+)</name>
        <dbReference type="ChEBI" id="CHEBI:29105"/>
        <label>3</label>
    </ligand>
</feature>
<feature type="binding site" evidence="4">
    <location>
        <position position="53"/>
    </location>
    <ligand>
        <name>Zn(2+)</name>
        <dbReference type="ChEBI" id="CHEBI:29105"/>
        <label>2</label>
    </ligand>
</feature>
<feature type="binding site" evidence="4">
    <location>
        <position position="60"/>
    </location>
    <ligand>
        <name>Zn(2+)</name>
        <dbReference type="ChEBI" id="CHEBI:29105"/>
        <label>2</label>
    </ligand>
</feature>
<feature type="binding site" evidence="4">
    <location>
        <position position="64"/>
    </location>
    <ligand>
        <name>Zn(2+)</name>
        <dbReference type="ChEBI" id="CHEBI:29105"/>
        <label>3</label>
    </ligand>
</feature>
<feature type="binding site" evidence="4">
    <location>
        <position position="70"/>
    </location>
    <ligand>
        <name>Zn(2+)</name>
        <dbReference type="ChEBI" id="CHEBI:29105"/>
        <label>3</label>
    </ligand>
</feature>
<feature type="binding site" evidence="4">
    <location>
        <position position="83"/>
    </location>
    <ligand>
        <name>Zn(2+)</name>
        <dbReference type="ChEBI" id="CHEBI:29105"/>
        <label>1</label>
    </ligand>
</feature>
<feature type="binding site" evidence="4">
    <location>
        <position position="86"/>
    </location>
    <ligand>
        <name>Zn(2+)</name>
        <dbReference type="ChEBI" id="CHEBI:29105"/>
        <label>1</label>
    </ligand>
</feature>
<feature type="modified residue" description="Phosphoserine" evidence="3">
    <location>
        <position position="112"/>
    </location>
</feature>
<feature type="modified residue" description="Phosphoserine" evidence="3">
    <location>
        <position position="132"/>
    </location>
</feature>
<feature type="modified residue" description="Phosphoserine" evidence="3">
    <location>
        <position position="134"/>
    </location>
</feature>
<feature type="modified residue" description="Phosphothreonine" evidence="3">
    <location>
        <position position="259"/>
    </location>
</feature>
<feature type="modified residue" description="Phosphoserine" evidence="3">
    <location>
        <position position="306"/>
    </location>
</feature>
<feature type="modified residue" description="Phosphoserine" evidence="2">
    <location>
        <position position="369"/>
    </location>
</feature>
<feature type="modified residue" description="Phosphothreonine" evidence="3">
    <location>
        <position position="378"/>
    </location>
</feature>
<feature type="modified residue" description="Phosphoserine" evidence="3">
    <location>
        <position position="408"/>
    </location>
</feature>
<feature type="modified residue" description="Phosphoserine" evidence="3">
    <location>
        <position position="413"/>
    </location>
</feature>
<evidence type="ECO:0000250" key="1"/>
<evidence type="ECO:0000250" key="2">
    <source>
        <dbReference type="UniProtKB" id="Q8C6M1"/>
    </source>
</evidence>
<evidence type="ECO:0000250" key="3">
    <source>
        <dbReference type="UniProtKB" id="Q9Y2K6"/>
    </source>
</evidence>
<evidence type="ECO:0000255" key="4">
    <source>
        <dbReference type="PROSITE-ProRule" id="PRU00502"/>
    </source>
</evidence>
<evidence type="ECO:0000255" key="5">
    <source>
        <dbReference type="PROSITE-ProRule" id="PRU00613"/>
    </source>
</evidence>
<evidence type="ECO:0000255" key="6">
    <source>
        <dbReference type="PROSITE-ProRule" id="PRU10092"/>
    </source>
</evidence>
<evidence type="ECO:0000255" key="7">
    <source>
        <dbReference type="PROSITE-ProRule" id="PRU10093"/>
    </source>
</evidence>
<evidence type="ECO:0000256" key="8">
    <source>
        <dbReference type="SAM" id="MobiDB-lite"/>
    </source>
</evidence>
<evidence type="ECO:0000305" key="9"/>
<name>UBP20_BOVIN</name>
<dbReference type="EC" id="3.4.19.12"/>
<dbReference type="EMBL" id="BC153254">
    <property type="protein sequence ID" value="AAI53255.1"/>
    <property type="molecule type" value="mRNA"/>
</dbReference>
<dbReference type="RefSeq" id="NP_001098803.1">
    <property type="nucleotide sequence ID" value="NM_001105333.1"/>
</dbReference>
<dbReference type="RefSeq" id="XP_024854168.1">
    <property type="nucleotide sequence ID" value="XM_024998400.2"/>
</dbReference>
<dbReference type="RefSeq" id="XP_059747064.1">
    <property type="nucleotide sequence ID" value="XM_059891081.1"/>
</dbReference>
<dbReference type="FunCoup" id="A7Z056">
    <property type="interactions" value="3130"/>
</dbReference>
<dbReference type="STRING" id="9913.ENSBTAP00000027070"/>
<dbReference type="PaxDb" id="9913-ENSBTAP00000027070"/>
<dbReference type="Ensembl" id="ENSBTAT00000027070.6">
    <property type="protein sequence ID" value="ENSBTAP00000027070.5"/>
    <property type="gene ID" value="ENSBTAG00000020311.7"/>
</dbReference>
<dbReference type="GeneID" id="505839"/>
<dbReference type="KEGG" id="bta:505839"/>
<dbReference type="CTD" id="10868"/>
<dbReference type="VEuPathDB" id="HostDB:ENSBTAG00000020311"/>
<dbReference type="VGNC" id="VGNC:36715">
    <property type="gene designation" value="USP20"/>
</dbReference>
<dbReference type="eggNOG" id="KOG1870">
    <property type="taxonomic scope" value="Eukaryota"/>
</dbReference>
<dbReference type="GeneTree" id="ENSGT00940000158829"/>
<dbReference type="HOGENOM" id="CLU_004896_0_0_1"/>
<dbReference type="InParanoid" id="A7Z056"/>
<dbReference type="OMA" id="IDQDDEC"/>
<dbReference type="OrthoDB" id="73004at2759"/>
<dbReference type="TreeFam" id="TF352179"/>
<dbReference type="Reactome" id="R-BTA-5689880">
    <property type="pathway name" value="Ub-specific processing proteases"/>
</dbReference>
<dbReference type="Proteomes" id="UP000009136">
    <property type="component" value="Chromosome 11"/>
</dbReference>
<dbReference type="Bgee" id="ENSBTAG00000020311">
    <property type="expression patterns" value="Expressed in thyroid gland and 105 other cell types or tissues"/>
</dbReference>
<dbReference type="GO" id="GO:0005813">
    <property type="term" value="C:centrosome"/>
    <property type="evidence" value="ECO:0000250"/>
    <property type="project" value="UniProtKB"/>
</dbReference>
<dbReference type="GO" id="GO:0005783">
    <property type="term" value="C:endoplasmic reticulum"/>
    <property type="evidence" value="ECO:0007669"/>
    <property type="project" value="UniProtKB-SubCell"/>
</dbReference>
<dbReference type="GO" id="GO:0048471">
    <property type="term" value="C:perinuclear region of cytoplasm"/>
    <property type="evidence" value="ECO:0007669"/>
    <property type="project" value="UniProtKB-SubCell"/>
</dbReference>
<dbReference type="GO" id="GO:0004843">
    <property type="term" value="F:cysteine-type deubiquitinase activity"/>
    <property type="evidence" value="ECO:0000250"/>
    <property type="project" value="UniProtKB"/>
</dbReference>
<dbReference type="GO" id="GO:0004197">
    <property type="term" value="F:cysteine-type endopeptidase activity"/>
    <property type="evidence" value="ECO:0000250"/>
    <property type="project" value="UniProtKB"/>
</dbReference>
<dbReference type="GO" id="GO:0001664">
    <property type="term" value="F:G protein-coupled receptor binding"/>
    <property type="evidence" value="ECO:0007669"/>
    <property type="project" value="Ensembl"/>
</dbReference>
<dbReference type="GO" id="GO:0008270">
    <property type="term" value="F:zinc ion binding"/>
    <property type="evidence" value="ECO:0007669"/>
    <property type="project" value="UniProtKB-KW"/>
</dbReference>
<dbReference type="GO" id="GO:0140374">
    <property type="term" value="P:antiviral innate immune response"/>
    <property type="evidence" value="ECO:0007669"/>
    <property type="project" value="Ensembl"/>
</dbReference>
<dbReference type="GO" id="GO:0006897">
    <property type="term" value="P:endocytosis"/>
    <property type="evidence" value="ECO:0007669"/>
    <property type="project" value="UniProtKB-KW"/>
</dbReference>
<dbReference type="GO" id="GO:0043124">
    <property type="term" value="P:negative regulation of canonical NF-kappaB signal transduction"/>
    <property type="evidence" value="ECO:0007669"/>
    <property type="project" value="Ensembl"/>
</dbReference>
<dbReference type="GO" id="GO:0007399">
    <property type="term" value="P:nervous system development"/>
    <property type="evidence" value="ECO:0000318"/>
    <property type="project" value="GO_Central"/>
</dbReference>
<dbReference type="GO" id="GO:0010508">
    <property type="term" value="P:positive regulation of autophagy"/>
    <property type="evidence" value="ECO:0007669"/>
    <property type="project" value="Ensembl"/>
</dbReference>
<dbReference type="GO" id="GO:0016579">
    <property type="term" value="P:protein deubiquitination"/>
    <property type="evidence" value="ECO:0000250"/>
    <property type="project" value="UniProtKB"/>
</dbReference>
<dbReference type="GO" id="GO:0071108">
    <property type="term" value="P:protein K48-linked deubiquitination"/>
    <property type="evidence" value="ECO:0000250"/>
    <property type="project" value="UniProtKB"/>
</dbReference>
<dbReference type="GO" id="GO:0070536">
    <property type="term" value="P:protein K63-linked deubiquitination"/>
    <property type="evidence" value="ECO:0000250"/>
    <property type="project" value="UniProtKB"/>
</dbReference>
<dbReference type="GO" id="GO:0006508">
    <property type="term" value="P:proteolysis"/>
    <property type="evidence" value="ECO:0007669"/>
    <property type="project" value="UniProtKB-KW"/>
</dbReference>
<dbReference type="GO" id="GO:0008277">
    <property type="term" value="P:regulation of G protein-coupled receptor signaling pathway"/>
    <property type="evidence" value="ECO:0000250"/>
    <property type="project" value="UniProtKB"/>
</dbReference>
<dbReference type="CDD" id="cd02674">
    <property type="entry name" value="Peptidase_C19R"/>
    <property type="match status" value="1"/>
</dbReference>
<dbReference type="FunFam" id="3.30.2230.10:FF:000001">
    <property type="entry name" value="Ubiquitinyl hydrolase 1"/>
    <property type="match status" value="1"/>
</dbReference>
<dbReference type="FunFam" id="3.30.2230.10:FF:000002">
    <property type="entry name" value="Ubiquitinyl hydrolase 1"/>
    <property type="match status" value="1"/>
</dbReference>
<dbReference type="FunFam" id="3.30.40.10:FF:000065">
    <property type="entry name" value="Ubiquitinyl hydrolase 1"/>
    <property type="match status" value="1"/>
</dbReference>
<dbReference type="FunFam" id="3.90.70.10:FF:000120">
    <property type="entry name" value="Ubiquitinyl hydrolase 1"/>
    <property type="match status" value="1"/>
</dbReference>
<dbReference type="Gene3D" id="3.90.70.10">
    <property type="entry name" value="Cysteine proteinases"/>
    <property type="match status" value="2"/>
</dbReference>
<dbReference type="Gene3D" id="3.30.2230.10">
    <property type="entry name" value="DUSP-like"/>
    <property type="match status" value="2"/>
</dbReference>
<dbReference type="Gene3D" id="3.30.40.10">
    <property type="entry name" value="Zinc/RING finger domain, C3HC4 (zinc finger)"/>
    <property type="match status" value="1"/>
</dbReference>
<dbReference type="InterPro" id="IPR035927">
    <property type="entry name" value="DUSP-like_sf"/>
</dbReference>
<dbReference type="InterPro" id="IPR038765">
    <property type="entry name" value="Papain-like_cys_pep_sf"/>
</dbReference>
<dbReference type="InterPro" id="IPR006615">
    <property type="entry name" value="Pept_C19_DUSP"/>
</dbReference>
<dbReference type="InterPro" id="IPR001394">
    <property type="entry name" value="Peptidase_C19_UCH"/>
</dbReference>
<dbReference type="InterPro" id="IPR050185">
    <property type="entry name" value="Ub_carboxyl-term_hydrolase"/>
</dbReference>
<dbReference type="InterPro" id="IPR018200">
    <property type="entry name" value="USP_CS"/>
</dbReference>
<dbReference type="InterPro" id="IPR028889">
    <property type="entry name" value="USP_dom"/>
</dbReference>
<dbReference type="InterPro" id="IPR013083">
    <property type="entry name" value="Znf_RING/FYVE/PHD"/>
</dbReference>
<dbReference type="InterPro" id="IPR001607">
    <property type="entry name" value="Znf_UBP"/>
</dbReference>
<dbReference type="PANTHER" id="PTHR21646">
    <property type="entry name" value="UBIQUITIN CARBOXYL-TERMINAL HYDROLASE"/>
    <property type="match status" value="1"/>
</dbReference>
<dbReference type="PANTHER" id="PTHR21646:SF13">
    <property type="entry name" value="UBIQUITIN CARBOXYL-TERMINAL HYDROLASE 20"/>
    <property type="match status" value="1"/>
</dbReference>
<dbReference type="Pfam" id="PF06337">
    <property type="entry name" value="DUSP"/>
    <property type="match status" value="2"/>
</dbReference>
<dbReference type="Pfam" id="PF00443">
    <property type="entry name" value="UCH"/>
    <property type="match status" value="1"/>
</dbReference>
<dbReference type="Pfam" id="PF02148">
    <property type="entry name" value="zf-UBP"/>
    <property type="match status" value="1"/>
</dbReference>
<dbReference type="SMART" id="SM00695">
    <property type="entry name" value="DUSP"/>
    <property type="match status" value="2"/>
</dbReference>
<dbReference type="SMART" id="SM00290">
    <property type="entry name" value="ZnF_UBP"/>
    <property type="match status" value="1"/>
</dbReference>
<dbReference type="SUPFAM" id="SSF54001">
    <property type="entry name" value="Cysteine proteinases"/>
    <property type="match status" value="1"/>
</dbReference>
<dbReference type="SUPFAM" id="SSF143791">
    <property type="entry name" value="DUSP-like"/>
    <property type="match status" value="2"/>
</dbReference>
<dbReference type="SUPFAM" id="SSF57850">
    <property type="entry name" value="RING/U-box"/>
    <property type="match status" value="1"/>
</dbReference>
<dbReference type="PROSITE" id="PS51283">
    <property type="entry name" value="DUSP"/>
    <property type="match status" value="2"/>
</dbReference>
<dbReference type="PROSITE" id="PS00972">
    <property type="entry name" value="USP_1"/>
    <property type="match status" value="1"/>
</dbReference>
<dbReference type="PROSITE" id="PS00973">
    <property type="entry name" value="USP_2"/>
    <property type="match status" value="1"/>
</dbReference>
<dbReference type="PROSITE" id="PS50235">
    <property type="entry name" value="USP_3"/>
    <property type="match status" value="1"/>
</dbReference>
<dbReference type="PROSITE" id="PS50271">
    <property type="entry name" value="ZF_UBP"/>
    <property type="match status" value="1"/>
</dbReference>
<sequence length="912" mass="101815">MGDSRDLCPHLDSIGEVTKEDLLLKSKSTCQSCGVSGPNLWACLQVSCSYVGCGESFADHSTLHAQAKKHNLTVNLTTFRVWCYACEKEVFLEPRLAAHPPGPAPKFSEQDSPPPSHPLKAVPIAVADEGESESEDDDLKPRGLTGMKNLGNSCYMNAALQALSNCPPLTQFFLECGGLVRTDKKPALCKSYQKLVSEVWHRKRPSYVVPTSLSHGIKLVNPMFRGYAQQDTQEFLRCLMDQLHEELKEPVVATAAALTEARDSDSSDTDEKREGDRSPSEDEFLSCDSSSDRGEGDGQGRSGGGSQAEAELLMADEAGRAISEKERMKDRKFSWGQQRTNSEQVDEDADVDTAMAALEQQPPETQPPSPRSTSPCRTPEPDNEAHMRSSRPCSPVHHHEGHAKLASSPHRASPVRMGPAYVLKKAQVPGSRRRKEQSYRSVISDIFDGSVLSLVQCLTCDRVSTTVETFQDLSLPIPGKEDLAKLHSAIYQNVPAKPGACGDSYVAQGWLAFIVEYIRRFVVSCTPSWFWGPVVTLEDCLAAFFAADELKGDNMYSCERCKKLRNGVKYCKVLRLPEILCIHLKRFRHEVMYSFKISSHVSFPLEGLDLRPFLAKECTSQITTYDLLSVICHHGTAGSGHYIAYCQNVINGQWYEFDDQYVTEVHETVVQNAEAYVLFYRKSSEEAVRERQQVVSLAAMREPSLLRFYVSREWLNKFNTFAEPGPITNHTFLCSHGGIPPNKYHYIDDLVVILPQNVWEHLYSRFGGGPAVNHLYVCSICQVEIEALAKRRRVEIDTFIKLNKAFQAEESPSVIYCISMQWFREWEAFVKGKDNEPPGPIDNSRIAQVKGSGHIQLKPGADYGQISEETWVYLNNLYGGGPEIAIRQSVAQLPDPESLHGEQKIEAETRAL</sequence>